<reference key="1">
    <citation type="journal article" date="2005" name="Science">
        <title>The transcriptional landscape of the mammalian genome.</title>
        <authorList>
            <person name="Carninci P."/>
            <person name="Kasukawa T."/>
            <person name="Katayama S."/>
            <person name="Gough J."/>
            <person name="Frith M.C."/>
            <person name="Maeda N."/>
            <person name="Oyama R."/>
            <person name="Ravasi T."/>
            <person name="Lenhard B."/>
            <person name="Wells C."/>
            <person name="Kodzius R."/>
            <person name="Shimokawa K."/>
            <person name="Bajic V.B."/>
            <person name="Brenner S.E."/>
            <person name="Batalov S."/>
            <person name="Forrest A.R."/>
            <person name="Zavolan M."/>
            <person name="Davis M.J."/>
            <person name="Wilming L.G."/>
            <person name="Aidinis V."/>
            <person name="Allen J.E."/>
            <person name="Ambesi-Impiombato A."/>
            <person name="Apweiler R."/>
            <person name="Aturaliya R.N."/>
            <person name="Bailey T.L."/>
            <person name="Bansal M."/>
            <person name="Baxter L."/>
            <person name="Beisel K.W."/>
            <person name="Bersano T."/>
            <person name="Bono H."/>
            <person name="Chalk A.M."/>
            <person name="Chiu K.P."/>
            <person name="Choudhary V."/>
            <person name="Christoffels A."/>
            <person name="Clutterbuck D.R."/>
            <person name="Crowe M.L."/>
            <person name="Dalla E."/>
            <person name="Dalrymple B.P."/>
            <person name="de Bono B."/>
            <person name="Della Gatta G."/>
            <person name="di Bernardo D."/>
            <person name="Down T."/>
            <person name="Engstrom P."/>
            <person name="Fagiolini M."/>
            <person name="Faulkner G."/>
            <person name="Fletcher C.F."/>
            <person name="Fukushima T."/>
            <person name="Furuno M."/>
            <person name="Futaki S."/>
            <person name="Gariboldi M."/>
            <person name="Georgii-Hemming P."/>
            <person name="Gingeras T.R."/>
            <person name="Gojobori T."/>
            <person name="Green R.E."/>
            <person name="Gustincich S."/>
            <person name="Harbers M."/>
            <person name="Hayashi Y."/>
            <person name="Hensch T.K."/>
            <person name="Hirokawa N."/>
            <person name="Hill D."/>
            <person name="Huminiecki L."/>
            <person name="Iacono M."/>
            <person name="Ikeo K."/>
            <person name="Iwama A."/>
            <person name="Ishikawa T."/>
            <person name="Jakt M."/>
            <person name="Kanapin A."/>
            <person name="Katoh M."/>
            <person name="Kawasawa Y."/>
            <person name="Kelso J."/>
            <person name="Kitamura H."/>
            <person name="Kitano H."/>
            <person name="Kollias G."/>
            <person name="Krishnan S.P."/>
            <person name="Kruger A."/>
            <person name="Kummerfeld S.K."/>
            <person name="Kurochkin I.V."/>
            <person name="Lareau L.F."/>
            <person name="Lazarevic D."/>
            <person name="Lipovich L."/>
            <person name="Liu J."/>
            <person name="Liuni S."/>
            <person name="McWilliam S."/>
            <person name="Madan Babu M."/>
            <person name="Madera M."/>
            <person name="Marchionni L."/>
            <person name="Matsuda H."/>
            <person name="Matsuzawa S."/>
            <person name="Miki H."/>
            <person name="Mignone F."/>
            <person name="Miyake S."/>
            <person name="Morris K."/>
            <person name="Mottagui-Tabar S."/>
            <person name="Mulder N."/>
            <person name="Nakano N."/>
            <person name="Nakauchi H."/>
            <person name="Ng P."/>
            <person name="Nilsson R."/>
            <person name="Nishiguchi S."/>
            <person name="Nishikawa S."/>
            <person name="Nori F."/>
            <person name="Ohara O."/>
            <person name="Okazaki Y."/>
            <person name="Orlando V."/>
            <person name="Pang K.C."/>
            <person name="Pavan W.J."/>
            <person name="Pavesi G."/>
            <person name="Pesole G."/>
            <person name="Petrovsky N."/>
            <person name="Piazza S."/>
            <person name="Reed J."/>
            <person name="Reid J.F."/>
            <person name="Ring B.Z."/>
            <person name="Ringwald M."/>
            <person name="Rost B."/>
            <person name="Ruan Y."/>
            <person name="Salzberg S.L."/>
            <person name="Sandelin A."/>
            <person name="Schneider C."/>
            <person name="Schoenbach C."/>
            <person name="Sekiguchi K."/>
            <person name="Semple C.A."/>
            <person name="Seno S."/>
            <person name="Sessa L."/>
            <person name="Sheng Y."/>
            <person name="Shibata Y."/>
            <person name="Shimada H."/>
            <person name="Shimada K."/>
            <person name="Silva D."/>
            <person name="Sinclair B."/>
            <person name="Sperling S."/>
            <person name="Stupka E."/>
            <person name="Sugiura K."/>
            <person name="Sultana R."/>
            <person name="Takenaka Y."/>
            <person name="Taki K."/>
            <person name="Tammoja K."/>
            <person name="Tan S.L."/>
            <person name="Tang S."/>
            <person name="Taylor M.S."/>
            <person name="Tegner J."/>
            <person name="Teichmann S.A."/>
            <person name="Ueda H.R."/>
            <person name="van Nimwegen E."/>
            <person name="Verardo R."/>
            <person name="Wei C.L."/>
            <person name="Yagi K."/>
            <person name="Yamanishi H."/>
            <person name="Zabarovsky E."/>
            <person name="Zhu S."/>
            <person name="Zimmer A."/>
            <person name="Hide W."/>
            <person name="Bult C."/>
            <person name="Grimmond S.M."/>
            <person name="Teasdale R.D."/>
            <person name="Liu E.T."/>
            <person name="Brusic V."/>
            <person name="Quackenbush J."/>
            <person name="Wahlestedt C."/>
            <person name="Mattick J.S."/>
            <person name="Hume D.A."/>
            <person name="Kai C."/>
            <person name="Sasaki D."/>
            <person name="Tomaru Y."/>
            <person name="Fukuda S."/>
            <person name="Kanamori-Katayama M."/>
            <person name="Suzuki M."/>
            <person name="Aoki J."/>
            <person name="Arakawa T."/>
            <person name="Iida J."/>
            <person name="Imamura K."/>
            <person name="Itoh M."/>
            <person name="Kato T."/>
            <person name="Kawaji H."/>
            <person name="Kawagashira N."/>
            <person name="Kawashima T."/>
            <person name="Kojima M."/>
            <person name="Kondo S."/>
            <person name="Konno H."/>
            <person name="Nakano K."/>
            <person name="Ninomiya N."/>
            <person name="Nishio T."/>
            <person name="Okada M."/>
            <person name="Plessy C."/>
            <person name="Shibata K."/>
            <person name="Shiraki T."/>
            <person name="Suzuki S."/>
            <person name="Tagami M."/>
            <person name="Waki K."/>
            <person name="Watahiki A."/>
            <person name="Okamura-Oho Y."/>
            <person name="Suzuki H."/>
            <person name="Kawai J."/>
            <person name="Hayashizaki Y."/>
        </authorList>
    </citation>
    <scope>NUCLEOTIDE SEQUENCE [LARGE SCALE MRNA]</scope>
    <source>
        <strain>C57BL/6J</strain>
        <tissue>Egg</tissue>
    </source>
</reference>
<reference key="2">
    <citation type="journal article" date="2009" name="PLoS Biol.">
        <title>Lineage-specific biology revealed by a finished genome assembly of the mouse.</title>
        <authorList>
            <person name="Church D.M."/>
            <person name="Goodstadt L."/>
            <person name="Hillier L.W."/>
            <person name="Zody M.C."/>
            <person name="Goldstein S."/>
            <person name="She X."/>
            <person name="Bult C.J."/>
            <person name="Agarwala R."/>
            <person name="Cherry J.L."/>
            <person name="DiCuccio M."/>
            <person name="Hlavina W."/>
            <person name="Kapustin Y."/>
            <person name="Meric P."/>
            <person name="Maglott D."/>
            <person name="Birtle Z."/>
            <person name="Marques A.C."/>
            <person name="Graves T."/>
            <person name="Zhou S."/>
            <person name="Teague B."/>
            <person name="Potamousis K."/>
            <person name="Churas C."/>
            <person name="Place M."/>
            <person name="Herschleb J."/>
            <person name="Runnheim R."/>
            <person name="Forrest D."/>
            <person name="Amos-Landgraf J."/>
            <person name="Schwartz D.C."/>
            <person name="Cheng Z."/>
            <person name="Lindblad-Toh K."/>
            <person name="Eichler E.E."/>
            <person name="Ponting C.P."/>
        </authorList>
    </citation>
    <scope>NUCLEOTIDE SEQUENCE [LARGE SCALE GENOMIC DNA]</scope>
    <source>
        <strain>C57BL/6J</strain>
    </source>
</reference>
<reference key="3">
    <citation type="journal article" date="2008" name="Dev. Dyn.">
        <title>Expression of the novel Golgi protein GoPro49 is developmentally regulated during mesenchymal differentiation.</title>
        <authorList>
            <person name="Takatalo M."/>
            <person name="Jaervinen E."/>
            <person name="Laitinen S."/>
            <person name="Thesleff I."/>
            <person name="Roennholm R."/>
        </authorList>
    </citation>
    <scope>DEVELOPMENTAL STAGE</scope>
</reference>
<reference key="4">
    <citation type="journal article" date="2009" name="J. Dent. Res.">
        <title>Novel Golgi protein, GoPro49, is a specific dental follicle marker.</title>
        <authorList>
            <person name="Takatalo M.S."/>
            <person name="Tummers M."/>
            <person name="Thesleff I."/>
            <person name="Roennholm R."/>
        </authorList>
    </citation>
    <scope>SUBCELLULAR LOCATION</scope>
    <scope>DEVELOPMENTAL STAGE</scope>
</reference>
<reference key="5">
    <citation type="journal article" date="2013" name="Circ. Res.">
        <title>C3orf58, a novel paracrine protein, stimulates cardiomyocyte cell-cycle progression through the PI3K-AKT-CDK7 pathway.</title>
        <authorList>
            <person name="Beigi F."/>
            <person name="Schmeckpeper J."/>
            <person name="Pow-Anpongkul P."/>
            <person name="Payne J.A."/>
            <person name="Zhang L."/>
            <person name="Zhang Z."/>
            <person name="Huang J."/>
            <person name="Mirotsou M."/>
            <person name="Dzau V.J."/>
        </authorList>
    </citation>
    <scope>FUNCTION IN CARDIOMYOCYTE PROLIFERATION</scope>
    <scope>SUBCELLULAR LOCATION</scope>
    <scope>TISSUE SPECIFICITY</scope>
</reference>
<feature type="signal peptide" evidence="1">
    <location>
        <begin position="1"/>
        <end position="35"/>
    </location>
</feature>
<feature type="chain" id="PRO_0000226038" description="Divergent protein kinase domain 2A">
    <location>
        <begin position="36"/>
        <end position="430"/>
    </location>
</feature>
<feature type="sequence conflict" description="In Ref. 1; BAE24182." evidence="5" ref="1">
    <original>RLVPLKLGRLSRALKLAALG</original>
    <variation>MAVVLRMSNI</variation>
    <location>
        <begin position="3"/>
        <end position="22"/>
    </location>
</feature>
<feature type="sequence conflict" description="In Ref. 1; BAE24182." evidence="5" ref="1">
    <original>SHNVR</original>
    <variation>KSQCEVVSSDLYIFFAEKALTKLNHQKNCLE</variation>
    <location>
        <begin position="426"/>
        <end position="430"/>
    </location>
</feature>
<organism>
    <name type="scientific">Mus musculus</name>
    <name type="common">Mouse</name>
    <dbReference type="NCBI Taxonomy" id="10090"/>
    <lineage>
        <taxon>Eukaryota</taxon>
        <taxon>Metazoa</taxon>
        <taxon>Chordata</taxon>
        <taxon>Craniata</taxon>
        <taxon>Vertebrata</taxon>
        <taxon>Euteleostomi</taxon>
        <taxon>Mammalia</taxon>
        <taxon>Eutheria</taxon>
        <taxon>Euarchontoglires</taxon>
        <taxon>Glires</taxon>
        <taxon>Rodentia</taxon>
        <taxon>Myomorpha</taxon>
        <taxon>Muroidea</taxon>
        <taxon>Muridae</taxon>
        <taxon>Murinae</taxon>
        <taxon>Mus</taxon>
        <taxon>Mus</taxon>
    </lineage>
</organism>
<name>DIK2A_MOUSE</name>
<protein>
    <recommendedName>
        <fullName evidence="5">Divergent protein kinase domain 2A</fullName>
    </recommendedName>
    <alternativeName>
        <fullName>Deleted in autism protein 1 homolog</fullName>
    </alternativeName>
    <alternativeName>
        <fullName>Golgi Protein of 49 kDa</fullName>
        <shortName>GoPro49</shortName>
    </alternativeName>
    <alternativeName>
        <fullName>Hypoxia and AKT-induced stem cell factor</fullName>
        <shortName>HASF</shortName>
    </alternativeName>
</protein>
<proteinExistence type="evidence at protein level"/>
<comment type="function">
    <text evidence="4">May play a role in cardiomyocyte proliferation through paracrine signaling and activation of the PI3-kinase signaling cascade.</text>
</comment>
<comment type="subcellular location">
    <subcellularLocation>
        <location>Golgi apparatus</location>
    </subcellularLocation>
    <subcellularLocation>
        <location>Cytoplasmic vesicle</location>
        <location>COPI-coated vesicle</location>
    </subcellularLocation>
    <subcellularLocation>
        <location>Secreted</location>
    </subcellularLocation>
</comment>
<comment type="tissue specificity">
    <text evidence="4">Expressed in heart, brain, liver, spleen, kidney, lung, thymus, testis, ovary and muscle.</text>
</comment>
<comment type="developmental stage">
    <text evidence="2 3">As early as 12.5 dpc to 16.5 dpc, intense expression is restricted to mesenchymal condensations, which form the different cartilage elements of the developing skeleton. At 12.5 dpc, strongly expressed in all vertebrae, heart ventricle, dental follicle, interdigital tissue, tongue and cartilages of the basioccipital bone, maxilla, mandible and the region of the future nasal septum. At 14.5 and 16.5 dpc, expressed in ribs, long bones, interdigital tissue, metatarsals, dental follicle, cartilages of the mandible and nasal septum as well as vertebrae with stronger expression in posterior vertebrae. At 16.5 dpc, also expressed in paw bones and, in vertebrae, the expression is limited to mainly columnar, proliferating chondrocytes. At 4 days postnatal, intense expression in nasal cartilages, hair, dental and vibrissa follicles.</text>
</comment>
<comment type="similarity">
    <text evidence="5">Belongs to the DIPK family.</text>
</comment>
<keyword id="KW-0968">Cytoplasmic vesicle</keyword>
<keyword id="KW-0333">Golgi apparatus</keyword>
<keyword id="KW-1185">Reference proteome</keyword>
<keyword id="KW-0964">Secreted</keyword>
<keyword id="KW-0732">Signal</keyword>
<evidence type="ECO:0000255" key="1"/>
<evidence type="ECO:0000269" key="2">
    <source>
    </source>
</evidence>
<evidence type="ECO:0000269" key="3">
    <source>
    </source>
</evidence>
<evidence type="ECO:0000269" key="4">
    <source>
    </source>
</evidence>
<evidence type="ECO:0000305" key="5"/>
<accession>Q3USZ8</accession>
<accession>E9Q9E9</accession>
<dbReference type="EMBL" id="AK139920">
    <property type="protein sequence ID" value="BAE24182.1"/>
    <property type="molecule type" value="mRNA"/>
</dbReference>
<dbReference type="EMBL" id="AC160129">
    <property type="status" value="NOT_ANNOTATED_CDS"/>
    <property type="molecule type" value="Genomic_DNA"/>
</dbReference>
<dbReference type="CCDS" id="CCDS40725.1"/>
<dbReference type="RefSeq" id="NP_001028317.2">
    <property type="nucleotide sequence ID" value="NM_001033145.2"/>
</dbReference>
<dbReference type="FunCoup" id="Q3USZ8">
    <property type="interactions" value="721"/>
</dbReference>
<dbReference type="STRING" id="10090.ENSMUSP00000108651"/>
<dbReference type="PhosphoSitePlus" id="Q3USZ8"/>
<dbReference type="SwissPalm" id="Q3USZ8"/>
<dbReference type="PaxDb" id="10090-ENSMUSP00000108651"/>
<dbReference type="PeptideAtlas" id="Q3USZ8"/>
<dbReference type="Pumba" id="Q3USZ8"/>
<dbReference type="Antibodypedia" id="52825">
    <property type="antibodies" value="97 antibodies from 15 providers"/>
</dbReference>
<dbReference type="Ensembl" id="ENSMUST00000113028.2">
    <property type="protein sequence ID" value="ENSMUSP00000108651.2"/>
    <property type="gene ID" value="ENSMUSG00000045414.8"/>
</dbReference>
<dbReference type="GeneID" id="68861"/>
<dbReference type="KEGG" id="mmu:68861"/>
<dbReference type="UCSC" id="uc009rax.1">
    <property type="organism name" value="mouse"/>
</dbReference>
<dbReference type="AGR" id="MGI:1916111"/>
<dbReference type="CTD" id="205428"/>
<dbReference type="MGI" id="MGI:1916111">
    <property type="gene designation" value="Dipk2a"/>
</dbReference>
<dbReference type="VEuPathDB" id="HostDB:ENSMUSG00000045414"/>
<dbReference type="eggNOG" id="ENOG502QUEB">
    <property type="taxonomic scope" value="Eukaryota"/>
</dbReference>
<dbReference type="GeneTree" id="ENSGT00520000055625"/>
<dbReference type="HOGENOM" id="CLU_052524_0_0_1"/>
<dbReference type="InParanoid" id="Q3USZ8"/>
<dbReference type="OMA" id="LWAACYI"/>
<dbReference type="OrthoDB" id="10035316at2759"/>
<dbReference type="PhylomeDB" id="Q3USZ8"/>
<dbReference type="TreeFam" id="TF313319"/>
<dbReference type="BioGRID-ORCS" id="68861">
    <property type="hits" value="2 hits in 77 CRISPR screens"/>
</dbReference>
<dbReference type="PRO" id="PR:Q3USZ8"/>
<dbReference type="Proteomes" id="UP000000589">
    <property type="component" value="Chromosome 9"/>
</dbReference>
<dbReference type="RNAct" id="Q3USZ8">
    <property type="molecule type" value="protein"/>
</dbReference>
<dbReference type="Bgee" id="ENSMUSG00000045414">
    <property type="expression patterns" value="Expressed in cerebellum lobe and 293 other cell types or tissues"/>
</dbReference>
<dbReference type="GO" id="GO:0030126">
    <property type="term" value="C:COPI vesicle coat"/>
    <property type="evidence" value="ECO:0000266"/>
    <property type="project" value="MGI"/>
</dbReference>
<dbReference type="GO" id="GO:0030137">
    <property type="term" value="C:COPI-coated vesicle"/>
    <property type="evidence" value="ECO:0000314"/>
    <property type="project" value="MGI"/>
</dbReference>
<dbReference type="GO" id="GO:0005576">
    <property type="term" value="C:extracellular region"/>
    <property type="evidence" value="ECO:0000314"/>
    <property type="project" value="MGI"/>
</dbReference>
<dbReference type="GO" id="GO:0005615">
    <property type="term" value="C:extracellular space"/>
    <property type="evidence" value="ECO:0000250"/>
    <property type="project" value="UniProtKB"/>
</dbReference>
<dbReference type="GO" id="GO:0000139">
    <property type="term" value="C:Golgi membrane"/>
    <property type="evidence" value="ECO:0000266"/>
    <property type="project" value="MGI"/>
</dbReference>
<dbReference type="GO" id="GO:0060038">
    <property type="term" value="P:cardiac muscle cell proliferation"/>
    <property type="evidence" value="ECO:0000250"/>
    <property type="project" value="UniProtKB"/>
</dbReference>
<dbReference type="GO" id="GO:0034392">
    <property type="term" value="P:negative regulation of smooth muscle cell apoptotic process"/>
    <property type="evidence" value="ECO:0000315"/>
    <property type="project" value="MGI"/>
</dbReference>
<dbReference type="GO" id="GO:0051896">
    <property type="term" value="P:regulation of phosphatidylinositol 3-kinase/protein kinase B signal transduction"/>
    <property type="evidence" value="ECO:0000250"/>
    <property type="project" value="UniProtKB"/>
</dbReference>
<dbReference type="GO" id="GO:0048199">
    <property type="term" value="P:vesicle targeting, to, from or within Golgi"/>
    <property type="evidence" value="ECO:0000305"/>
    <property type="project" value="MGI"/>
</dbReference>
<dbReference type="InterPro" id="IPR020519">
    <property type="entry name" value="DIPK2A/B"/>
</dbReference>
<dbReference type="InterPro" id="IPR022049">
    <property type="entry name" value="FAM69_kinase_dom"/>
</dbReference>
<dbReference type="PANTHER" id="PTHR32073:SF6">
    <property type="entry name" value="DIVERGENT PROTEIN KINASE DOMAIN 2A"/>
    <property type="match status" value="1"/>
</dbReference>
<dbReference type="PANTHER" id="PTHR32073">
    <property type="entry name" value="GH11358P"/>
    <property type="match status" value="1"/>
</dbReference>
<dbReference type="Pfam" id="PF12260">
    <property type="entry name" value="PIP49_C"/>
    <property type="match status" value="1"/>
</dbReference>
<sequence length="430" mass="49463">MWRLVPLKLGRLSRALKLAALGSLLVLMLLHSPSLLASWQRNELADRRFLQLNKCPACFGTSWCRRFLNGQVGFETWGRLRLLDFLNVKNVYFAQYGEPREGGRRRVVLKRLGSQRELAQLDQSICKRATGRPRCDLLQAMPRTEFARLNGDVRLLTPEAVEGWSDLVHCPSQRLLDRLVRRYAETKDSGSFLLRNLKDSERMQLLLTLAFNPEPLVLQSFPSDEGWPFAKYLGACGRMVAVNYVGEELWSYFNAPWEKRVDLAWQLMEIAEQLTNNDFEFALYLLDVSFDNFAVGPRDGKVIIVDAENVLVADKRLIRQNKPENWDVWYESKFDDCDKEACLSFSKEILCARVTVDHNYYAVCQNLLSRHATWRGTSGGLLHDPPSEIAKDGRLEALLDECTNPKKRYGRFQAAKELRGYLAQLSHNVR</sequence>
<gene>
    <name type="primary">Dipk2a</name>
</gene>